<comment type="function">
    <text evidence="4">Atypical sulfotransferase family member with very low affinity for 3'-phospho-5'-adenylyl sulfate (PAPS) and very low catalytic activity towards L-triiodothyronine, thyroxine, estrone, p-nitrophenol, 2-naphthylamine, and 2-beta-naphthol. May have a role in the metabolism of drugs and neurotransmitters in the CNS.</text>
</comment>
<comment type="subcellular location">
    <subcellularLocation>
        <location evidence="1">Cytoplasm</location>
    </subcellularLocation>
</comment>
<comment type="alternative products">
    <event type="alternative splicing"/>
    <isoform>
        <id>P63046-1</id>
        <id>Q9DC97-1</id>
        <name>1</name>
        <sequence type="displayed"/>
    </isoform>
    <isoform>
        <id>P63046-2</id>
        <id>Q9DC97-2</id>
        <name>2</name>
        <sequence type="described" ref="VSP_006305"/>
    </isoform>
</comment>
<comment type="tissue specificity">
    <text evidence="4">Expressed in brain, cerebellum and hypothalamus. Not detected in pancreas, liver, lung, intestine, kidney, uterus, adrenal gland, thymus, spleen, epididymis, testicle, and heart.</text>
</comment>
<comment type="similarity">
    <text evidence="6">Belongs to the sulfotransferase 1 family.</text>
</comment>
<organism>
    <name type="scientific">Mus musculus</name>
    <name type="common">Mouse</name>
    <dbReference type="NCBI Taxonomy" id="10090"/>
    <lineage>
        <taxon>Eukaryota</taxon>
        <taxon>Metazoa</taxon>
        <taxon>Chordata</taxon>
        <taxon>Craniata</taxon>
        <taxon>Vertebrata</taxon>
        <taxon>Euteleostomi</taxon>
        <taxon>Mammalia</taxon>
        <taxon>Eutheria</taxon>
        <taxon>Euarchontoglires</taxon>
        <taxon>Glires</taxon>
        <taxon>Rodentia</taxon>
        <taxon>Myomorpha</taxon>
        <taxon>Muroidea</taxon>
        <taxon>Muridae</taxon>
        <taxon>Murinae</taxon>
        <taxon>Mus</taxon>
        <taxon>Mus</taxon>
    </lineage>
</organism>
<keyword id="KW-0025">Alternative splicing</keyword>
<keyword id="KW-0963">Cytoplasm</keyword>
<keyword id="KW-0443">Lipid metabolism</keyword>
<keyword id="KW-0597">Phosphoprotein</keyword>
<keyword id="KW-1185">Reference proteome</keyword>
<keyword id="KW-0753">Steroid metabolism</keyword>
<keyword id="KW-0808">Transferase</keyword>
<accession>P63046</accession>
<accession>O88872</accession>
<accession>Q3TXY5</accession>
<accession>Q91XS5</accession>
<accession>Q9CWY7</accession>
<accession>Q9DC97</accession>
<proteinExistence type="evidence at protein level"/>
<protein>
    <recommendedName>
        <fullName>Sulfotransferase 4A1</fullName>
        <shortName>ST4A1</shortName>
        <ecNumber>2.8.2.-</ecNumber>
    </recommendedName>
    <alternativeName>
        <fullName>Brain sulfotransferase-like protein</fullName>
        <shortName>mBR-STL</shortName>
    </alternativeName>
    <alternativeName>
        <fullName>Nervous system sulfotransferase</fullName>
        <shortName>NST</shortName>
    </alternativeName>
</protein>
<reference key="1">
    <citation type="journal article" date="2002" name="Gene">
        <title>Highly conserved mouse and human brain sulfotransferases: molecular cloning, expression, and functional characterization.</title>
        <authorList>
            <person name="Sakakibara Y."/>
            <person name="Suiko M."/>
            <person name="Pai T.G."/>
            <person name="Nakayama T."/>
            <person name="Takami Y."/>
            <person name="Katafuchi J."/>
            <person name="Liu M.-C."/>
        </authorList>
    </citation>
    <scope>NUCLEOTIDE SEQUENCE [MRNA] (ISOFORM 1)</scope>
    <scope>FUNCTION</scope>
    <scope>TISSUE SPECIFICITY</scope>
    <source>
        <tissue>Brain</tissue>
    </source>
</reference>
<reference key="2">
    <citation type="journal article" date="2005" name="Science">
        <title>The transcriptional landscape of the mammalian genome.</title>
        <authorList>
            <person name="Carninci P."/>
            <person name="Kasukawa T."/>
            <person name="Katayama S."/>
            <person name="Gough J."/>
            <person name="Frith M.C."/>
            <person name="Maeda N."/>
            <person name="Oyama R."/>
            <person name="Ravasi T."/>
            <person name="Lenhard B."/>
            <person name="Wells C."/>
            <person name="Kodzius R."/>
            <person name="Shimokawa K."/>
            <person name="Bajic V.B."/>
            <person name="Brenner S.E."/>
            <person name="Batalov S."/>
            <person name="Forrest A.R."/>
            <person name="Zavolan M."/>
            <person name="Davis M.J."/>
            <person name="Wilming L.G."/>
            <person name="Aidinis V."/>
            <person name="Allen J.E."/>
            <person name="Ambesi-Impiombato A."/>
            <person name="Apweiler R."/>
            <person name="Aturaliya R.N."/>
            <person name="Bailey T.L."/>
            <person name="Bansal M."/>
            <person name="Baxter L."/>
            <person name="Beisel K.W."/>
            <person name="Bersano T."/>
            <person name="Bono H."/>
            <person name="Chalk A.M."/>
            <person name="Chiu K.P."/>
            <person name="Choudhary V."/>
            <person name="Christoffels A."/>
            <person name="Clutterbuck D.R."/>
            <person name="Crowe M.L."/>
            <person name="Dalla E."/>
            <person name="Dalrymple B.P."/>
            <person name="de Bono B."/>
            <person name="Della Gatta G."/>
            <person name="di Bernardo D."/>
            <person name="Down T."/>
            <person name="Engstrom P."/>
            <person name="Fagiolini M."/>
            <person name="Faulkner G."/>
            <person name="Fletcher C.F."/>
            <person name="Fukushima T."/>
            <person name="Furuno M."/>
            <person name="Futaki S."/>
            <person name="Gariboldi M."/>
            <person name="Georgii-Hemming P."/>
            <person name="Gingeras T.R."/>
            <person name="Gojobori T."/>
            <person name="Green R.E."/>
            <person name="Gustincich S."/>
            <person name="Harbers M."/>
            <person name="Hayashi Y."/>
            <person name="Hensch T.K."/>
            <person name="Hirokawa N."/>
            <person name="Hill D."/>
            <person name="Huminiecki L."/>
            <person name="Iacono M."/>
            <person name="Ikeo K."/>
            <person name="Iwama A."/>
            <person name="Ishikawa T."/>
            <person name="Jakt M."/>
            <person name="Kanapin A."/>
            <person name="Katoh M."/>
            <person name="Kawasawa Y."/>
            <person name="Kelso J."/>
            <person name="Kitamura H."/>
            <person name="Kitano H."/>
            <person name="Kollias G."/>
            <person name="Krishnan S.P."/>
            <person name="Kruger A."/>
            <person name="Kummerfeld S.K."/>
            <person name="Kurochkin I.V."/>
            <person name="Lareau L.F."/>
            <person name="Lazarevic D."/>
            <person name="Lipovich L."/>
            <person name="Liu J."/>
            <person name="Liuni S."/>
            <person name="McWilliam S."/>
            <person name="Madan Babu M."/>
            <person name="Madera M."/>
            <person name="Marchionni L."/>
            <person name="Matsuda H."/>
            <person name="Matsuzawa S."/>
            <person name="Miki H."/>
            <person name="Mignone F."/>
            <person name="Miyake S."/>
            <person name="Morris K."/>
            <person name="Mottagui-Tabar S."/>
            <person name="Mulder N."/>
            <person name="Nakano N."/>
            <person name="Nakauchi H."/>
            <person name="Ng P."/>
            <person name="Nilsson R."/>
            <person name="Nishiguchi S."/>
            <person name="Nishikawa S."/>
            <person name="Nori F."/>
            <person name="Ohara O."/>
            <person name="Okazaki Y."/>
            <person name="Orlando V."/>
            <person name="Pang K.C."/>
            <person name="Pavan W.J."/>
            <person name="Pavesi G."/>
            <person name="Pesole G."/>
            <person name="Petrovsky N."/>
            <person name="Piazza S."/>
            <person name="Reed J."/>
            <person name="Reid J.F."/>
            <person name="Ring B.Z."/>
            <person name="Ringwald M."/>
            <person name="Rost B."/>
            <person name="Ruan Y."/>
            <person name="Salzberg S.L."/>
            <person name="Sandelin A."/>
            <person name="Schneider C."/>
            <person name="Schoenbach C."/>
            <person name="Sekiguchi K."/>
            <person name="Semple C.A."/>
            <person name="Seno S."/>
            <person name="Sessa L."/>
            <person name="Sheng Y."/>
            <person name="Shibata Y."/>
            <person name="Shimada H."/>
            <person name="Shimada K."/>
            <person name="Silva D."/>
            <person name="Sinclair B."/>
            <person name="Sperling S."/>
            <person name="Stupka E."/>
            <person name="Sugiura K."/>
            <person name="Sultana R."/>
            <person name="Takenaka Y."/>
            <person name="Taki K."/>
            <person name="Tammoja K."/>
            <person name="Tan S.L."/>
            <person name="Tang S."/>
            <person name="Taylor M.S."/>
            <person name="Tegner J."/>
            <person name="Teichmann S.A."/>
            <person name="Ueda H.R."/>
            <person name="van Nimwegen E."/>
            <person name="Verardo R."/>
            <person name="Wei C.L."/>
            <person name="Yagi K."/>
            <person name="Yamanishi H."/>
            <person name="Zabarovsky E."/>
            <person name="Zhu S."/>
            <person name="Zimmer A."/>
            <person name="Hide W."/>
            <person name="Bult C."/>
            <person name="Grimmond S.M."/>
            <person name="Teasdale R.D."/>
            <person name="Liu E.T."/>
            <person name="Brusic V."/>
            <person name="Quackenbush J."/>
            <person name="Wahlestedt C."/>
            <person name="Mattick J.S."/>
            <person name="Hume D.A."/>
            <person name="Kai C."/>
            <person name="Sasaki D."/>
            <person name="Tomaru Y."/>
            <person name="Fukuda S."/>
            <person name="Kanamori-Katayama M."/>
            <person name="Suzuki M."/>
            <person name="Aoki J."/>
            <person name="Arakawa T."/>
            <person name="Iida J."/>
            <person name="Imamura K."/>
            <person name="Itoh M."/>
            <person name="Kato T."/>
            <person name="Kawaji H."/>
            <person name="Kawagashira N."/>
            <person name="Kawashima T."/>
            <person name="Kojima M."/>
            <person name="Kondo S."/>
            <person name="Konno H."/>
            <person name="Nakano K."/>
            <person name="Ninomiya N."/>
            <person name="Nishio T."/>
            <person name="Okada M."/>
            <person name="Plessy C."/>
            <person name="Shibata K."/>
            <person name="Shiraki T."/>
            <person name="Suzuki S."/>
            <person name="Tagami M."/>
            <person name="Waki K."/>
            <person name="Watahiki A."/>
            <person name="Okamura-Oho Y."/>
            <person name="Suzuki H."/>
            <person name="Kawai J."/>
            <person name="Hayashizaki Y."/>
        </authorList>
    </citation>
    <scope>NUCLEOTIDE SEQUENCE [LARGE SCALE MRNA] (ISOFORMS 1 AND 2)</scope>
    <source>
        <strain>C57BL/6J</strain>
        <tissue>Embryonic stem cell</tissue>
        <tissue>Visual cortex</tissue>
    </source>
</reference>
<reference key="3">
    <citation type="journal article" date="2004" name="Genome Res.">
        <title>The status, quality, and expansion of the NIH full-length cDNA project: the Mammalian Gene Collection (MGC).</title>
        <authorList>
            <consortium name="The MGC Project Team"/>
        </authorList>
    </citation>
    <scope>NUCLEOTIDE SEQUENCE [LARGE SCALE MRNA] (ISOFORM 1)</scope>
    <source>
        <strain>C57BL/6J</strain>
        <tissue>Brain</tissue>
    </source>
</reference>
<reference key="4">
    <citation type="journal article" date="2010" name="Cell">
        <title>A tissue-specific atlas of mouse protein phosphorylation and expression.</title>
        <authorList>
            <person name="Huttlin E.L."/>
            <person name="Jedrychowski M.P."/>
            <person name="Elias J.E."/>
            <person name="Goswami T."/>
            <person name="Rad R."/>
            <person name="Beausoleil S.A."/>
            <person name="Villen J."/>
            <person name="Haas W."/>
            <person name="Sowa M.E."/>
            <person name="Gygi S.P."/>
        </authorList>
    </citation>
    <scope>IDENTIFICATION BY MASS SPECTROMETRY [LARGE SCALE ANALYSIS]</scope>
    <source>
        <tissue>Brain</tissue>
    </source>
</reference>
<dbReference type="EC" id="2.8.2.-"/>
<dbReference type="EMBL" id="AF059257">
    <property type="protein sequence ID" value="AAC63999.1"/>
    <property type="molecule type" value="mRNA"/>
</dbReference>
<dbReference type="EMBL" id="AK003034">
    <property type="protein sequence ID" value="BAB22522.1"/>
    <property type="molecule type" value="mRNA"/>
</dbReference>
<dbReference type="EMBL" id="AK010293">
    <property type="protein sequence ID" value="BAB26829.1"/>
    <property type="molecule type" value="mRNA"/>
</dbReference>
<dbReference type="EMBL" id="AK159034">
    <property type="protein sequence ID" value="BAE34779.1"/>
    <property type="molecule type" value="mRNA"/>
</dbReference>
<dbReference type="EMBL" id="BC051132">
    <property type="protein sequence ID" value="AAH51132.1"/>
    <property type="molecule type" value="mRNA"/>
</dbReference>
<dbReference type="EMBL" id="BC054757">
    <property type="protein sequence ID" value="AAH54757.1"/>
    <property type="molecule type" value="mRNA"/>
</dbReference>
<dbReference type="CCDS" id="CCDS27708.1"/>
<dbReference type="CCDS" id="CCDS88819.1">
    <molecule id="P63046-2"/>
</dbReference>
<dbReference type="RefSeq" id="NP_001343444.1">
    <molecule id="P63046-2"/>
    <property type="nucleotide sequence ID" value="NM_001356515.1"/>
</dbReference>
<dbReference type="RefSeq" id="NP_038901.3">
    <molecule id="P63046-1"/>
    <property type="nucleotide sequence ID" value="NM_013873.3"/>
</dbReference>
<dbReference type="RefSeq" id="XP_006521128.1">
    <property type="nucleotide sequence ID" value="XM_006521065.3"/>
</dbReference>
<dbReference type="SMR" id="P63046"/>
<dbReference type="BioGRID" id="205926">
    <property type="interactions" value="3"/>
</dbReference>
<dbReference type="FunCoup" id="P63046">
    <property type="interactions" value="826"/>
</dbReference>
<dbReference type="STRING" id="10090.ENSMUSP00000080973"/>
<dbReference type="iPTMnet" id="P63046"/>
<dbReference type="MetOSite" id="P63046"/>
<dbReference type="PhosphoSitePlus" id="P63046"/>
<dbReference type="PaxDb" id="10090-ENSMUSP00000080973"/>
<dbReference type="PeptideAtlas" id="P63046"/>
<dbReference type="ProteomicsDB" id="258746"/>
<dbReference type="ProteomicsDB" id="258747">
    <molecule id="P63046-2"/>
</dbReference>
<dbReference type="Antibodypedia" id="304">
    <property type="antibodies" value="168 antibodies from 24 providers"/>
</dbReference>
<dbReference type="DNASU" id="29859"/>
<dbReference type="Ensembl" id="ENSMUST00000082365.6">
    <molecule id="P63046-1"/>
    <property type="protein sequence ID" value="ENSMUSP00000080973.6"/>
    <property type="gene ID" value="ENSMUSG00000018865.10"/>
</dbReference>
<dbReference type="Ensembl" id="ENSMUST00000229826.2">
    <molecule id="P63046-2"/>
    <property type="protein sequence ID" value="ENSMUSP00000155695.2"/>
    <property type="gene ID" value="ENSMUSG00000018865.10"/>
</dbReference>
<dbReference type="GeneID" id="29859"/>
<dbReference type="KEGG" id="mmu:29859"/>
<dbReference type="UCSC" id="uc007xbs.1">
    <property type="organism name" value="mouse"/>
</dbReference>
<dbReference type="UCSC" id="uc007xbt.1">
    <molecule id="P63046-2"/>
    <property type="organism name" value="mouse"/>
</dbReference>
<dbReference type="AGR" id="MGI:1888971"/>
<dbReference type="CTD" id="25830"/>
<dbReference type="MGI" id="MGI:1888971">
    <property type="gene designation" value="Sult4a1"/>
</dbReference>
<dbReference type="VEuPathDB" id="HostDB:ENSMUSG00000018865"/>
<dbReference type="eggNOG" id="KOG1584">
    <property type="taxonomic scope" value="Eukaryota"/>
</dbReference>
<dbReference type="GeneTree" id="ENSGT00940000158662"/>
<dbReference type="HOGENOM" id="CLU_027239_1_1_1"/>
<dbReference type="InParanoid" id="P63046"/>
<dbReference type="OMA" id="MVESCHQ"/>
<dbReference type="OrthoDB" id="205623at2759"/>
<dbReference type="PhylomeDB" id="P63046"/>
<dbReference type="TreeFam" id="TF321745"/>
<dbReference type="BRENDA" id="2.8.2.1">
    <property type="organism ID" value="3474"/>
</dbReference>
<dbReference type="Reactome" id="R-MMU-156584">
    <property type="pathway name" value="Cytosolic sulfonation of small molecules"/>
</dbReference>
<dbReference type="BioGRID-ORCS" id="29859">
    <property type="hits" value="2 hits in 81 CRISPR screens"/>
</dbReference>
<dbReference type="ChiTaRS" id="Sult4a1">
    <property type="organism name" value="mouse"/>
</dbReference>
<dbReference type="PRO" id="PR:P63046"/>
<dbReference type="Proteomes" id="UP000000589">
    <property type="component" value="Chromosome 15"/>
</dbReference>
<dbReference type="RNAct" id="P63046">
    <property type="molecule type" value="protein"/>
</dbReference>
<dbReference type="Bgee" id="ENSMUSG00000018865">
    <property type="expression patterns" value="Expressed in medial dorsal nucleus of thalamus and 118 other cell types or tissues"/>
</dbReference>
<dbReference type="GO" id="GO:0005737">
    <property type="term" value="C:cytoplasm"/>
    <property type="evidence" value="ECO:0000304"/>
    <property type="project" value="MGI"/>
</dbReference>
<dbReference type="GO" id="GO:0005829">
    <property type="term" value="C:cytosol"/>
    <property type="evidence" value="ECO:0000314"/>
    <property type="project" value="UniProtKB"/>
</dbReference>
<dbReference type="GO" id="GO:0005739">
    <property type="term" value="C:mitochondrion"/>
    <property type="evidence" value="ECO:0000314"/>
    <property type="project" value="UniProtKB"/>
</dbReference>
<dbReference type="GO" id="GO:0042802">
    <property type="term" value="F:identical protein binding"/>
    <property type="evidence" value="ECO:0007669"/>
    <property type="project" value="Ensembl"/>
</dbReference>
<dbReference type="GO" id="GO:0008146">
    <property type="term" value="F:sulfotransferase activity"/>
    <property type="evidence" value="ECO:0000314"/>
    <property type="project" value="MGI"/>
</dbReference>
<dbReference type="GO" id="GO:0140059">
    <property type="term" value="P:dendrite arborization"/>
    <property type="evidence" value="ECO:0007669"/>
    <property type="project" value="Ensembl"/>
</dbReference>
<dbReference type="GO" id="GO:0008202">
    <property type="term" value="P:steroid metabolic process"/>
    <property type="evidence" value="ECO:0007669"/>
    <property type="project" value="UniProtKB-KW"/>
</dbReference>
<dbReference type="GO" id="GO:0006790">
    <property type="term" value="P:sulfur compound metabolic process"/>
    <property type="evidence" value="ECO:0000314"/>
    <property type="project" value="MGI"/>
</dbReference>
<dbReference type="FunFam" id="3.40.50.300:FF:001121">
    <property type="entry name" value="Sulfotransferase"/>
    <property type="match status" value="1"/>
</dbReference>
<dbReference type="Gene3D" id="3.40.50.300">
    <property type="entry name" value="P-loop containing nucleotide triphosphate hydrolases"/>
    <property type="match status" value="1"/>
</dbReference>
<dbReference type="InterPro" id="IPR027417">
    <property type="entry name" value="P-loop_NTPase"/>
</dbReference>
<dbReference type="InterPro" id="IPR000863">
    <property type="entry name" value="Sulfotransferase_dom"/>
</dbReference>
<dbReference type="PANTHER" id="PTHR11783">
    <property type="entry name" value="SULFOTRANSFERASE SULT"/>
    <property type="match status" value="1"/>
</dbReference>
<dbReference type="Pfam" id="PF00685">
    <property type="entry name" value="Sulfotransfer_1"/>
    <property type="match status" value="1"/>
</dbReference>
<dbReference type="SUPFAM" id="SSF52540">
    <property type="entry name" value="P-loop containing nucleoside triphosphate hydrolases"/>
    <property type="match status" value="1"/>
</dbReference>
<gene>
    <name type="primary">Sult4a1</name>
    <name type="synonym">Sultx3</name>
</gene>
<feature type="chain" id="PRO_0000085168" description="Sulfotransferase 4A1">
    <location>
        <begin position="1"/>
        <end position="284"/>
    </location>
</feature>
<feature type="modified residue" description="Phosphothreonine" evidence="2">
    <location>
        <position position="8"/>
    </location>
</feature>
<feature type="modified residue" description="Phosphothreonine" evidence="2">
    <location>
        <position position="11"/>
    </location>
</feature>
<feature type="modified residue" description="Phosphothreonine" evidence="3">
    <location>
        <position position="205"/>
    </location>
</feature>
<feature type="splice variant" id="VSP_006305" description="In isoform 2." evidence="5">
    <original>GRVGLWKDIFTVSMNEKFDLVYKQKMGKCDLTFDFYL</original>
    <variation>AHCLFTQKIALRWRGCRGSGSRLHCLDLVHVTA</variation>
    <location>
        <begin position="248"/>
        <end position="284"/>
    </location>
</feature>
<feature type="sequence conflict" description="In Ref. 2; BAB22522." evidence="6" ref="2">
    <original>A</original>
    <variation>R</variation>
    <location>
        <position position="6"/>
    </location>
</feature>
<name>ST4A1_MOUSE</name>
<evidence type="ECO:0000250" key="1"/>
<evidence type="ECO:0000250" key="2">
    <source>
        <dbReference type="UniProtKB" id="P63047"/>
    </source>
</evidence>
<evidence type="ECO:0000250" key="3">
    <source>
        <dbReference type="UniProtKB" id="Q9BR01"/>
    </source>
</evidence>
<evidence type="ECO:0000269" key="4">
    <source>
    </source>
</evidence>
<evidence type="ECO:0000303" key="5">
    <source>
    </source>
</evidence>
<evidence type="ECO:0000305" key="6"/>
<sequence>MAESEAETPGTPGEFESKYFEFHGVRLPPFCRGKMEDIADFPVRPSDVWIVTYPKSGTSLLQEVVYLVSQGADPDEIGLMNIDEQLPVLEYPQPGLDIIKELTSPRLIKSHLPYRFLPSDLHNGDSKVIYMARNPKDLVVSYYQFHRSLRTMSYRGTFQEFCRRFMNDKLGYGSWFEHVQEFWEHRMDANVLFLKYEDMHRDLVTMVEQLARFLGVSCDKAQLESLIEHCHQLVDQCCNAEALPVGRGRVGLWKDIFTVSMNEKFDLVYKQKMGKCDLTFDFYL</sequence>